<name>UVRC_CHLL3</name>
<feature type="chain" id="PRO_0000264921" description="UvrABC system protein C">
    <location>
        <begin position="1"/>
        <end position="628"/>
    </location>
</feature>
<feature type="domain" description="GIY-YIG" evidence="1">
    <location>
        <begin position="21"/>
        <end position="100"/>
    </location>
</feature>
<feature type="domain" description="UVR" evidence="1">
    <location>
        <begin position="214"/>
        <end position="249"/>
    </location>
</feature>
<comment type="function">
    <text evidence="1">The UvrABC repair system catalyzes the recognition and processing of DNA lesions. UvrC both incises the 5' and 3' sides of the lesion. The N-terminal half is responsible for the 3' incision and the C-terminal half is responsible for the 5' incision.</text>
</comment>
<comment type="subunit">
    <text evidence="1">Interacts with UvrB in an incision complex.</text>
</comment>
<comment type="subcellular location">
    <subcellularLocation>
        <location evidence="1">Cytoplasm</location>
    </subcellularLocation>
</comment>
<comment type="similarity">
    <text evidence="1">Belongs to the UvrC family.</text>
</comment>
<sequence>MAAETDTTLPELRETVASLPTGPGIYQFKNSAGKVIYVGKAKNIRSRVRSYFRDPRQLTGKTQVLVGHITDLEIIITSSEVEALILENNLIKELKPRYNVNLKDDKTYPWLVITGEPFPRVFISRNRTRDKSTWFGPYTEAGQLRSILELIGSIFPVRSCRYSLTPENIAAKKHKLCLDYHIGKCKGPCEGLQNEAEYLEMIGEIVRLLKGRTAGLLKELHEKMLTAAAELRFEEAAELKMQLQSLRRYADRQKMVAADGMDRDVSAIASGDDEACGVVFRIREGKMLGARHFILTNTAGEPEKKLLGKVLEGYYLKSPEAMPEEVLLSAQLDLEDTESLQALSREREEECPTRRKAVKFTVPQIGEKAHLVEMCRQNARHHLAEYLVQKQKRGEAAREHYGVKALGESLHLETPPKRIECFDNSHLQGTDYVSSMVCFVNGKPLKSAYRKFRLQSLEEACGTGSSDDYAAMEQVLGRRYGGSLQDELPLPDLIVVDGGKGQANSAKKVLDRLGITVPVIGLAKRLEEVFTPDADGPFNLPKTSPALKLLQQLRDEAHRFAITYHRNIRSKRTLETGLTTIPGVGEKIAFALLERFGSVDGVAAASAEELSQFAGKVKGMSIFRHYHP</sequence>
<protein>
    <recommendedName>
        <fullName evidence="1">UvrABC system protein C</fullName>
        <shortName evidence="1">Protein UvrC</shortName>
    </recommendedName>
    <alternativeName>
        <fullName evidence="1">Excinuclease ABC subunit C</fullName>
    </alternativeName>
</protein>
<evidence type="ECO:0000255" key="1">
    <source>
        <dbReference type="HAMAP-Rule" id="MF_00203"/>
    </source>
</evidence>
<proteinExistence type="inferred from homology"/>
<keyword id="KW-0963">Cytoplasm</keyword>
<keyword id="KW-0227">DNA damage</keyword>
<keyword id="KW-0228">DNA excision</keyword>
<keyword id="KW-0234">DNA repair</keyword>
<keyword id="KW-0267">Excision nuclease</keyword>
<keyword id="KW-1185">Reference proteome</keyword>
<keyword id="KW-0742">SOS response</keyword>
<organism>
    <name type="scientific">Chlorobium luteolum (strain DSM 273 / BCRC 81028 / 2530)</name>
    <name type="common">Pelodictyon luteolum</name>
    <dbReference type="NCBI Taxonomy" id="319225"/>
    <lineage>
        <taxon>Bacteria</taxon>
        <taxon>Pseudomonadati</taxon>
        <taxon>Chlorobiota</taxon>
        <taxon>Chlorobiia</taxon>
        <taxon>Chlorobiales</taxon>
        <taxon>Chlorobiaceae</taxon>
        <taxon>Chlorobium/Pelodictyon group</taxon>
        <taxon>Pelodictyon</taxon>
    </lineage>
</organism>
<accession>Q3B5K8</accession>
<reference key="1">
    <citation type="submission" date="2005-08" db="EMBL/GenBank/DDBJ databases">
        <title>Complete sequence of Pelodictyon luteolum DSM 273.</title>
        <authorList>
            <consortium name="US DOE Joint Genome Institute"/>
            <person name="Copeland A."/>
            <person name="Lucas S."/>
            <person name="Lapidus A."/>
            <person name="Barry K."/>
            <person name="Detter J.C."/>
            <person name="Glavina T."/>
            <person name="Hammon N."/>
            <person name="Israni S."/>
            <person name="Pitluck S."/>
            <person name="Bryant D."/>
            <person name="Schmutz J."/>
            <person name="Larimer F."/>
            <person name="Land M."/>
            <person name="Kyrpides N."/>
            <person name="Ivanova N."/>
            <person name="Richardson P."/>
        </authorList>
    </citation>
    <scope>NUCLEOTIDE SEQUENCE [LARGE SCALE GENOMIC DNA]</scope>
    <source>
        <strain>DSM 273 / BCRC 81028 / 2530</strain>
    </source>
</reference>
<dbReference type="EMBL" id="CP000096">
    <property type="protein sequence ID" value="ABB23373.1"/>
    <property type="molecule type" value="Genomic_DNA"/>
</dbReference>
<dbReference type="RefSeq" id="WP_011357248.1">
    <property type="nucleotide sequence ID" value="NC_007512.1"/>
</dbReference>
<dbReference type="SMR" id="Q3B5K8"/>
<dbReference type="STRING" id="319225.Plut_0485"/>
<dbReference type="KEGG" id="plt:Plut_0485"/>
<dbReference type="eggNOG" id="COG0322">
    <property type="taxonomic scope" value="Bacteria"/>
</dbReference>
<dbReference type="HOGENOM" id="CLU_014841_3_2_10"/>
<dbReference type="OrthoDB" id="9804933at2"/>
<dbReference type="Proteomes" id="UP000002709">
    <property type="component" value="Chromosome"/>
</dbReference>
<dbReference type="GO" id="GO:0005737">
    <property type="term" value="C:cytoplasm"/>
    <property type="evidence" value="ECO:0007669"/>
    <property type="project" value="UniProtKB-SubCell"/>
</dbReference>
<dbReference type="GO" id="GO:0009380">
    <property type="term" value="C:excinuclease repair complex"/>
    <property type="evidence" value="ECO:0007669"/>
    <property type="project" value="InterPro"/>
</dbReference>
<dbReference type="GO" id="GO:0003677">
    <property type="term" value="F:DNA binding"/>
    <property type="evidence" value="ECO:0007669"/>
    <property type="project" value="UniProtKB-UniRule"/>
</dbReference>
<dbReference type="GO" id="GO:0009381">
    <property type="term" value="F:excinuclease ABC activity"/>
    <property type="evidence" value="ECO:0007669"/>
    <property type="project" value="UniProtKB-UniRule"/>
</dbReference>
<dbReference type="GO" id="GO:0006289">
    <property type="term" value="P:nucleotide-excision repair"/>
    <property type="evidence" value="ECO:0007669"/>
    <property type="project" value="UniProtKB-UniRule"/>
</dbReference>
<dbReference type="GO" id="GO:0009432">
    <property type="term" value="P:SOS response"/>
    <property type="evidence" value="ECO:0007669"/>
    <property type="project" value="UniProtKB-UniRule"/>
</dbReference>
<dbReference type="CDD" id="cd10434">
    <property type="entry name" value="GIY-YIG_UvrC_Cho"/>
    <property type="match status" value="1"/>
</dbReference>
<dbReference type="FunFam" id="3.40.1440.10:FF:000001">
    <property type="entry name" value="UvrABC system protein C"/>
    <property type="match status" value="1"/>
</dbReference>
<dbReference type="Gene3D" id="1.10.150.20">
    <property type="entry name" value="5' to 3' exonuclease, C-terminal subdomain"/>
    <property type="match status" value="1"/>
</dbReference>
<dbReference type="Gene3D" id="3.40.1440.10">
    <property type="entry name" value="GIY-YIG endonuclease"/>
    <property type="match status" value="1"/>
</dbReference>
<dbReference type="Gene3D" id="4.10.860.10">
    <property type="entry name" value="UVR domain"/>
    <property type="match status" value="1"/>
</dbReference>
<dbReference type="Gene3D" id="3.30.420.340">
    <property type="entry name" value="UvrC, RNAse H endonuclease domain"/>
    <property type="match status" value="1"/>
</dbReference>
<dbReference type="HAMAP" id="MF_00203">
    <property type="entry name" value="UvrC"/>
    <property type="match status" value="1"/>
</dbReference>
<dbReference type="InterPro" id="IPR000305">
    <property type="entry name" value="GIY-YIG_endonuc"/>
</dbReference>
<dbReference type="InterPro" id="IPR035901">
    <property type="entry name" value="GIY-YIG_endonuc_sf"/>
</dbReference>
<dbReference type="InterPro" id="IPR047296">
    <property type="entry name" value="GIY-YIG_UvrC_Cho"/>
</dbReference>
<dbReference type="InterPro" id="IPR010994">
    <property type="entry name" value="RuvA_2-like"/>
</dbReference>
<dbReference type="InterPro" id="IPR001943">
    <property type="entry name" value="UVR_dom"/>
</dbReference>
<dbReference type="InterPro" id="IPR036876">
    <property type="entry name" value="UVR_dom_sf"/>
</dbReference>
<dbReference type="InterPro" id="IPR050066">
    <property type="entry name" value="UvrABC_protein_C"/>
</dbReference>
<dbReference type="InterPro" id="IPR004791">
    <property type="entry name" value="UvrC"/>
</dbReference>
<dbReference type="InterPro" id="IPR001162">
    <property type="entry name" value="UvrC_RNase_H_dom"/>
</dbReference>
<dbReference type="InterPro" id="IPR038476">
    <property type="entry name" value="UvrC_RNase_H_dom_sf"/>
</dbReference>
<dbReference type="NCBIfam" id="NF001824">
    <property type="entry name" value="PRK00558.1-5"/>
    <property type="match status" value="1"/>
</dbReference>
<dbReference type="NCBIfam" id="TIGR00194">
    <property type="entry name" value="uvrC"/>
    <property type="match status" value="1"/>
</dbReference>
<dbReference type="PANTHER" id="PTHR30562:SF1">
    <property type="entry name" value="UVRABC SYSTEM PROTEIN C"/>
    <property type="match status" value="1"/>
</dbReference>
<dbReference type="PANTHER" id="PTHR30562">
    <property type="entry name" value="UVRC/OXIDOREDUCTASE"/>
    <property type="match status" value="1"/>
</dbReference>
<dbReference type="Pfam" id="PF01541">
    <property type="entry name" value="GIY-YIG"/>
    <property type="match status" value="1"/>
</dbReference>
<dbReference type="Pfam" id="PF14520">
    <property type="entry name" value="HHH_5"/>
    <property type="match status" value="1"/>
</dbReference>
<dbReference type="Pfam" id="PF02151">
    <property type="entry name" value="UVR"/>
    <property type="match status" value="1"/>
</dbReference>
<dbReference type="Pfam" id="PF22920">
    <property type="entry name" value="UvrC_RNaseH"/>
    <property type="match status" value="1"/>
</dbReference>
<dbReference type="Pfam" id="PF08459">
    <property type="entry name" value="UvrC_RNaseH_dom"/>
    <property type="match status" value="1"/>
</dbReference>
<dbReference type="SMART" id="SM00465">
    <property type="entry name" value="GIYc"/>
    <property type="match status" value="1"/>
</dbReference>
<dbReference type="SUPFAM" id="SSF46600">
    <property type="entry name" value="C-terminal UvrC-binding domain of UvrB"/>
    <property type="match status" value="1"/>
</dbReference>
<dbReference type="SUPFAM" id="SSF82771">
    <property type="entry name" value="GIY-YIG endonuclease"/>
    <property type="match status" value="1"/>
</dbReference>
<dbReference type="SUPFAM" id="SSF47781">
    <property type="entry name" value="RuvA domain 2-like"/>
    <property type="match status" value="1"/>
</dbReference>
<dbReference type="PROSITE" id="PS50164">
    <property type="entry name" value="GIY_YIG"/>
    <property type="match status" value="1"/>
</dbReference>
<dbReference type="PROSITE" id="PS50151">
    <property type="entry name" value="UVR"/>
    <property type="match status" value="1"/>
</dbReference>
<dbReference type="PROSITE" id="PS50165">
    <property type="entry name" value="UVRC"/>
    <property type="match status" value="1"/>
</dbReference>
<gene>
    <name evidence="1" type="primary">uvrC</name>
    <name type="ordered locus">Plut_0485</name>
</gene>